<comment type="function">
    <text evidence="1">Required for endonucleolytic cleavage during polyadenylation-dependent pre-mRNA 3'-end formation.</text>
</comment>
<comment type="subcellular location">
    <subcellularLocation>
        <location evidence="1">Nucleus</location>
    </subcellularLocation>
</comment>
<comment type="similarity">
    <text evidence="1">Belongs to the Clp1 family. Clp1 subfamily.</text>
</comment>
<feature type="chain" id="PRO_0000375179" description="Protein CLP1 homolog">
    <location>
        <begin position="1"/>
        <end position="425"/>
    </location>
</feature>
<feature type="binding site" evidence="1">
    <location>
        <position position="18"/>
    </location>
    <ligand>
        <name>ATP</name>
        <dbReference type="ChEBI" id="CHEBI:30616"/>
    </ligand>
</feature>
<feature type="binding site" evidence="1">
    <location>
        <position position="59"/>
    </location>
    <ligand>
        <name>ATP</name>
        <dbReference type="ChEBI" id="CHEBI:30616"/>
    </ligand>
</feature>
<feature type="binding site" evidence="1">
    <location>
        <begin position="121"/>
        <end position="126"/>
    </location>
    <ligand>
        <name>ATP</name>
        <dbReference type="ChEBI" id="CHEBI:30616"/>
    </ligand>
</feature>
<keyword id="KW-0067">ATP-binding</keyword>
<keyword id="KW-0507">mRNA processing</keyword>
<keyword id="KW-0547">Nucleotide-binding</keyword>
<keyword id="KW-0539">Nucleus</keyword>
<keyword id="KW-1185">Reference proteome</keyword>
<dbReference type="EMBL" id="CH916375">
    <property type="protein sequence ID" value="EDV98498.1"/>
    <property type="molecule type" value="Genomic_DNA"/>
</dbReference>
<dbReference type="SMR" id="B4JVN0"/>
<dbReference type="FunCoup" id="B4JVN0">
    <property type="interactions" value="1534"/>
</dbReference>
<dbReference type="STRING" id="7222.B4JVN0"/>
<dbReference type="EnsemblMetazoa" id="FBtr0158565">
    <property type="protein sequence ID" value="FBpp0157057"/>
    <property type="gene ID" value="FBgn0130608"/>
</dbReference>
<dbReference type="EnsemblMetazoa" id="XM_001995390.2">
    <property type="protein sequence ID" value="XP_001995426.1"/>
    <property type="gene ID" value="LOC6568947"/>
</dbReference>
<dbReference type="GeneID" id="6568947"/>
<dbReference type="KEGG" id="dgr:6568947"/>
<dbReference type="CTD" id="36494"/>
<dbReference type="eggNOG" id="KOG2749">
    <property type="taxonomic scope" value="Eukaryota"/>
</dbReference>
<dbReference type="HOGENOM" id="CLU_018195_1_0_1"/>
<dbReference type="InParanoid" id="B4JVN0"/>
<dbReference type="OMA" id="VQYVNCH"/>
<dbReference type="OrthoDB" id="258143at2759"/>
<dbReference type="PhylomeDB" id="B4JVN0"/>
<dbReference type="Proteomes" id="UP000001070">
    <property type="component" value="Unassembled WGS sequence"/>
</dbReference>
<dbReference type="GO" id="GO:0005849">
    <property type="term" value="C:mRNA cleavage factor complex"/>
    <property type="evidence" value="ECO:0007669"/>
    <property type="project" value="InterPro"/>
</dbReference>
<dbReference type="GO" id="GO:0000214">
    <property type="term" value="C:tRNA-intron endonuclease complex"/>
    <property type="evidence" value="ECO:0000250"/>
    <property type="project" value="UniProtKB"/>
</dbReference>
<dbReference type="GO" id="GO:0005524">
    <property type="term" value="F:ATP binding"/>
    <property type="evidence" value="ECO:0007669"/>
    <property type="project" value="UniProtKB-UniRule"/>
</dbReference>
<dbReference type="GO" id="GO:0051731">
    <property type="term" value="F:polynucleotide 5'-hydroxyl-kinase activity"/>
    <property type="evidence" value="ECO:0007669"/>
    <property type="project" value="InterPro"/>
</dbReference>
<dbReference type="GO" id="GO:0031124">
    <property type="term" value="P:mRNA 3'-end processing"/>
    <property type="evidence" value="ECO:0007669"/>
    <property type="project" value="UniProtKB-UniRule"/>
</dbReference>
<dbReference type="GO" id="GO:0006388">
    <property type="term" value="P:tRNA splicing, via endonucleolytic cleavage and ligation"/>
    <property type="evidence" value="ECO:0000250"/>
    <property type="project" value="UniProtKB"/>
</dbReference>
<dbReference type="CDD" id="cd01983">
    <property type="entry name" value="SIMIBI"/>
    <property type="match status" value="1"/>
</dbReference>
<dbReference type="FunFam" id="2.40.30.330:FF:000001">
    <property type="entry name" value="Protein CLP1 homolog"/>
    <property type="match status" value="1"/>
</dbReference>
<dbReference type="FunFam" id="3.40.50.300:FF:000454">
    <property type="entry name" value="Protein CLP1 homolog"/>
    <property type="match status" value="1"/>
</dbReference>
<dbReference type="FunFam" id="2.60.120.1030:FF:000001">
    <property type="entry name" value="Protein CLP1 homolog 5"/>
    <property type="match status" value="1"/>
</dbReference>
<dbReference type="Gene3D" id="2.60.120.1030">
    <property type="entry name" value="Clp1, DNA binding domain"/>
    <property type="match status" value="1"/>
</dbReference>
<dbReference type="Gene3D" id="3.40.50.300">
    <property type="entry name" value="P-loop containing nucleotide triphosphate hydrolases"/>
    <property type="match status" value="1"/>
</dbReference>
<dbReference type="Gene3D" id="2.40.30.330">
    <property type="entry name" value="Pre-mRNA cleavage complex subunit Clp1, C-terminal domain"/>
    <property type="match status" value="1"/>
</dbReference>
<dbReference type="HAMAP" id="MF_03035">
    <property type="entry name" value="Clp1"/>
    <property type="match status" value="1"/>
</dbReference>
<dbReference type="InterPro" id="IPR028606">
    <property type="entry name" value="Clp1"/>
</dbReference>
<dbReference type="InterPro" id="IPR045116">
    <property type="entry name" value="Clp1/Grc3"/>
</dbReference>
<dbReference type="InterPro" id="IPR010655">
    <property type="entry name" value="Clp1_C"/>
</dbReference>
<dbReference type="InterPro" id="IPR038238">
    <property type="entry name" value="Clp1_C_sf"/>
</dbReference>
<dbReference type="InterPro" id="IPR032324">
    <property type="entry name" value="Clp1_N"/>
</dbReference>
<dbReference type="InterPro" id="IPR038239">
    <property type="entry name" value="Clp1_N_sf"/>
</dbReference>
<dbReference type="InterPro" id="IPR032319">
    <property type="entry name" value="CLP1_P"/>
</dbReference>
<dbReference type="InterPro" id="IPR027417">
    <property type="entry name" value="P-loop_NTPase"/>
</dbReference>
<dbReference type="PANTHER" id="PTHR12755">
    <property type="entry name" value="CLEAVAGE/POLYADENYLATION FACTOR IA SUBUNIT CLP1P"/>
    <property type="match status" value="1"/>
</dbReference>
<dbReference type="PANTHER" id="PTHR12755:SF6">
    <property type="entry name" value="POLYRIBONUCLEOTIDE 5'-HYDROXYL-KINASE CLP1"/>
    <property type="match status" value="1"/>
</dbReference>
<dbReference type="Pfam" id="PF06807">
    <property type="entry name" value="Clp1"/>
    <property type="match status" value="1"/>
</dbReference>
<dbReference type="Pfam" id="PF16573">
    <property type="entry name" value="CLP1_N"/>
    <property type="match status" value="1"/>
</dbReference>
<dbReference type="Pfam" id="PF16575">
    <property type="entry name" value="CLP1_P"/>
    <property type="match status" value="1"/>
</dbReference>
<dbReference type="SUPFAM" id="SSF52540">
    <property type="entry name" value="P-loop containing nucleoside triphosphate hydrolases"/>
    <property type="match status" value="1"/>
</dbReference>
<reference key="1">
    <citation type="journal article" date="2007" name="Nature">
        <title>Evolution of genes and genomes on the Drosophila phylogeny.</title>
        <authorList>
            <consortium name="Drosophila 12 genomes consortium"/>
        </authorList>
    </citation>
    <scope>NUCLEOTIDE SEQUENCE [LARGE SCALE GENOMIC DNA]</scope>
    <source>
        <strain>Tucson 15287-2541.00</strain>
    </source>
</reference>
<protein>
    <recommendedName>
        <fullName evidence="1">Protein CLP1 homolog</fullName>
    </recommendedName>
</protein>
<accession>B4JVN0</accession>
<proteinExistence type="inferred from homology"/>
<evidence type="ECO:0000255" key="1">
    <source>
        <dbReference type="HAMAP-Rule" id="MF_03035"/>
    </source>
</evidence>
<name>CLP1_DROGR</name>
<gene>
    <name type="primary">cbc</name>
    <name type="ORF">GH23151</name>
</gene>
<organism>
    <name type="scientific">Drosophila grimshawi</name>
    <name type="common">Hawaiian fruit fly</name>
    <name type="synonym">Idiomyia grimshawi</name>
    <dbReference type="NCBI Taxonomy" id="7222"/>
    <lineage>
        <taxon>Eukaryota</taxon>
        <taxon>Metazoa</taxon>
        <taxon>Ecdysozoa</taxon>
        <taxon>Arthropoda</taxon>
        <taxon>Hexapoda</taxon>
        <taxon>Insecta</taxon>
        <taxon>Pterygota</taxon>
        <taxon>Neoptera</taxon>
        <taxon>Endopterygota</taxon>
        <taxon>Diptera</taxon>
        <taxon>Brachycera</taxon>
        <taxon>Muscomorpha</taxon>
        <taxon>Ephydroidea</taxon>
        <taxon>Drosophilidae</taxon>
        <taxon>Drosophila</taxon>
        <taxon>Hawaiian Drosophila</taxon>
    </lineage>
</organism>
<sequence length="425" mass="47215">MSEDNSQGREYTLEADSELRFEIEQKNAKVLVTLLTGFAELFGTELVKKKKYEFGVGAKVAIFTYQGCVIHVSGQMDVCYISKETPMVQYINCHAALEQFRLEAEQRDKRGPSVLIVGPMDVGKSTLCRILLNYAVRVGRRPLYADLDVGQGAISVAGNVATILIERPASIEDGFAKTAPLVYHFGHKSPSGNSVLYNAVVSKMAEVTLQSLDANKRTKSSGIIVNTCGWVKGSGYEHLLHAARAYRARAIFVLDQERLYNDLLRDVPANVHVVLLPKSGGVVERSKGLRHESREQRIKEYFYGNARTPFYPFSFEVKFQDLRLYKIGAPPLPDSCMPIGMKAEDNKKKVVAVTATPALLHHILTLSFAESTDDDVIGTNIAGFCCVTEVDMERQSVMLLSPQPRPLPPNALLLWSELQFMDNHA</sequence>